<accession>O74019</accession>
<proteinExistence type="inferred from homology"/>
<gene>
    <name evidence="1" type="primary">rpo5</name>
    <name evidence="1" type="synonym">rpoH</name>
    <name type="ordered locus">PH1546.1</name>
    <name type="ORF">PHS044</name>
</gene>
<evidence type="ECO:0000255" key="1">
    <source>
        <dbReference type="HAMAP-Rule" id="MF_00025"/>
    </source>
</evidence>
<keyword id="KW-0963">Cytoplasm</keyword>
<keyword id="KW-0240">DNA-directed RNA polymerase</keyword>
<keyword id="KW-0548">Nucleotidyltransferase</keyword>
<keyword id="KW-0804">Transcription</keyword>
<keyword id="KW-0808">Transferase</keyword>
<dbReference type="EC" id="2.7.7.6" evidence="1"/>
<dbReference type="EMBL" id="BA000001">
    <property type="protein sequence ID" value="BAA30658.1"/>
    <property type="molecule type" value="Genomic_DNA"/>
</dbReference>
<dbReference type="PIR" id="B71032">
    <property type="entry name" value="B71032"/>
</dbReference>
<dbReference type="RefSeq" id="WP_010885626.1">
    <property type="nucleotide sequence ID" value="NC_000961.1"/>
</dbReference>
<dbReference type="SMR" id="O74019"/>
<dbReference type="STRING" id="70601.gene:9378533"/>
<dbReference type="EnsemblBacteria" id="BAA30658">
    <property type="protein sequence ID" value="BAA30658"/>
    <property type="gene ID" value="BAA30658"/>
</dbReference>
<dbReference type="GeneID" id="1443866"/>
<dbReference type="KEGG" id="pho:PHS044"/>
<dbReference type="eggNOG" id="arCOG04258">
    <property type="taxonomic scope" value="Archaea"/>
</dbReference>
<dbReference type="OrthoDB" id="30537at2157"/>
<dbReference type="Proteomes" id="UP000000752">
    <property type="component" value="Chromosome"/>
</dbReference>
<dbReference type="GO" id="GO:0005737">
    <property type="term" value="C:cytoplasm"/>
    <property type="evidence" value="ECO:0007669"/>
    <property type="project" value="UniProtKB-SubCell"/>
</dbReference>
<dbReference type="GO" id="GO:0000428">
    <property type="term" value="C:DNA-directed RNA polymerase complex"/>
    <property type="evidence" value="ECO:0007669"/>
    <property type="project" value="UniProtKB-KW"/>
</dbReference>
<dbReference type="GO" id="GO:0003677">
    <property type="term" value="F:DNA binding"/>
    <property type="evidence" value="ECO:0007669"/>
    <property type="project" value="InterPro"/>
</dbReference>
<dbReference type="GO" id="GO:0003899">
    <property type="term" value="F:DNA-directed RNA polymerase activity"/>
    <property type="evidence" value="ECO:0007669"/>
    <property type="project" value="UniProtKB-UniRule"/>
</dbReference>
<dbReference type="GO" id="GO:0006366">
    <property type="term" value="P:transcription by RNA polymerase II"/>
    <property type="evidence" value="ECO:0007669"/>
    <property type="project" value="TreeGrafter"/>
</dbReference>
<dbReference type="GO" id="GO:0006362">
    <property type="term" value="P:transcription elongation by RNA polymerase I"/>
    <property type="evidence" value="ECO:0007669"/>
    <property type="project" value="TreeGrafter"/>
</dbReference>
<dbReference type="GO" id="GO:0042797">
    <property type="term" value="P:tRNA transcription by RNA polymerase III"/>
    <property type="evidence" value="ECO:0007669"/>
    <property type="project" value="TreeGrafter"/>
</dbReference>
<dbReference type="FunFam" id="3.90.940.20:FF:000001">
    <property type="entry name" value="DNA-directed RNA polymerases I, II, and III subunit RPABC1"/>
    <property type="match status" value="1"/>
</dbReference>
<dbReference type="Gene3D" id="3.90.940.20">
    <property type="entry name" value="RPB5-like RNA polymerase subunit"/>
    <property type="match status" value="1"/>
</dbReference>
<dbReference type="HAMAP" id="MF_00025">
    <property type="entry name" value="RNApol_Rpo5_RPB5"/>
    <property type="match status" value="1"/>
</dbReference>
<dbReference type="InterPro" id="IPR014381">
    <property type="entry name" value="Arch_Rpo5/euc_Rpb5"/>
</dbReference>
<dbReference type="InterPro" id="IPR000783">
    <property type="entry name" value="RNA_pol_subH/Rpb5_C"/>
</dbReference>
<dbReference type="InterPro" id="IPR020608">
    <property type="entry name" value="RNA_pol_subH/Rpb5_CS"/>
</dbReference>
<dbReference type="InterPro" id="IPR035913">
    <property type="entry name" value="RPB5-like_sf"/>
</dbReference>
<dbReference type="NCBIfam" id="NF007129">
    <property type="entry name" value="PRK09570.1"/>
    <property type="match status" value="1"/>
</dbReference>
<dbReference type="PANTHER" id="PTHR10535">
    <property type="entry name" value="DNA-DIRECTED RNA POLYMERASES I, II, AND III SUBUNIT RPABC1"/>
    <property type="match status" value="1"/>
</dbReference>
<dbReference type="PANTHER" id="PTHR10535:SF0">
    <property type="entry name" value="DNA-DIRECTED RNA POLYMERASES I, II, AND III SUBUNIT RPABC1"/>
    <property type="match status" value="1"/>
</dbReference>
<dbReference type="Pfam" id="PF01191">
    <property type="entry name" value="RNA_pol_Rpb5_C"/>
    <property type="match status" value="1"/>
</dbReference>
<dbReference type="SUPFAM" id="SSF55287">
    <property type="entry name" value="RPB5-like RNA polymerase subunit"/>
    <property type="match status" value="1"/>
</dbReference>
<dbReference type="PROSITE" id="PS01110">
    <property type="entry name" value="RNA_POL_H_23KD"/>
    <property type="match status" value="1"/>
</dbReference>
<reference key="1">
    <citation type="journal article" date="1998" name="DNA Res.">
        <title>Complete sequence and gene organization of the genome of a hyper-thermophilic archaebacterium, Pyrococcus horikoshii OT3.</title>
        <authorList>
            <person name="Kawarabayasi Y."/>
            <person name="Sawada M."/>
            <person name="Horikawa H."/>
            <person name="Haikawa Y."/>
            <person name="Hino Y."/>
            <person name="Yamamoto S."/>
            <person name="Sekine M."/>
            <person name="Baba S."/>
            <person name="Kosugi H."/>
            <person name="Hosoyama A."/>
            <person name="Nagai Y."/>
            <person name="Sakai M."/>
            <person name="Ogura K."/>
            <person name="Otsuka R."/>
            <person name="Nakazawa H."/>
            <person name="Takamiya M."/>
            <person name="Ohfuku Y."/>
            <person name="Funahashi T."/>
            <person name="Tanaka T."/>
            <person name="Kudoh Y."/>
            <person name="Yamazaki J."/>
            <person name="Kushida N."/>
            <person name="Oguchi A."/>
            <person name="Aoki K."/>
            <person name="Yoshizawa T."/>
            <person name="Nakamura Y."/>
            <person name="Robb F.T."/>
            <person name="Horikoshi K."/>
            <person name="Masuchi Y."/>
            <person name="Shizuya H."/>
            <person name="Kikuchi H."/>
        </authorList>
    </citation>
    <scope>NUCLEOTIDE SEQUENCE [LARGE SCALE GENOMIC DNA]</scope>
    <source>
        <strain>ATCC 700860 / DSM 12428 / JCM 9974 / NBRC 100139 / OT-3</strain>
    </source>
</reference>
<feature type="chain" id="PRO_0000146101" description="DNA-directed RNA polymerase subunit Rpo5">
    <location>
        <begin position="1"/>
        <end position="82"/>
    </location>
</feature>
<organism>
    <name type="scientific">Pyrococcus horikoshii (strain ATCC 700860 / DSM 12428 / JCM 9974 / NBRC 100139 / OT-3)</name>
    <dbReference type="NCBI Taxonomy" id="70601"/>
    <lineage>
        <taxon>Archaea</taxon>
        <taxon>Methanobacteriati</taxon>
        <taxon>Methanobacteriota</taxon>
        <taxon>Thermococci</taxon>
        <taxon>Thermococcales</taxon>
        <taxon>Thermococcaceae</taxon>
        <taxon>Pyrococcus</taxon>
    </lineage>
</organism>
<name>RPO5_PYRHO</name>
<comment type="function">
    <text evidence="1">DNA-dependent RNA polymerase (RNAP) catalyzes the transcription of DNA into RNA using the four ribonucleoside triphosphates as substrates.</text>
</comment>
<comment type="catalytic activity">
    <reaction evidence="1">
        <text>RNA(n) + a ribonucleoside 5'-triphosphate = RNA(n+1) + diphosphate</text>
        <dbReference type="Rhea" id="RHEA:21248"/>
        <dbReference type="Rhea" id="RHEA-COMP:14527"/>
        <dbReference type="Rhea" id="RHEA-COMP:17342"/>
        <dbReference type="ChEBI" id="CHEBI:33019"/>
        <dbReference type="ChEBI" id="CHEBI:61557"/>
        <dbReference type="ChEBI" id="CHEBI:140395"/>
        <dbReference type="EC" id="2.7.7.6"/>
    </reaction>
</comment>
<comment type="subunit">
    <text evidence="1">Part of the RNA polymerase complex.</text>
</comment>
<comment type="subcellular location">
    <subcellularLocation>
        <location evidence="1">Cytoplasm</location>
    </subcellularLocation>
</comment>
<comment type="similarity">
    <text evidence="1">Belongs to the archaeal Rpo5/eukaryotic RPB5 RNA polymerase subunit family.</text>
</comment>
<sequence length="82" mass="9355">MSGKNEFNIFKHVLVPEHRILSEEEKKALLEKYKITPAQLPQIRASDPAVKALGAKPGDIIEIKRRSPTAGVYYYYRVVVED</sequence>
<protein>
    <recommendedName>
        <fullName evidence="1">DNA-directed RNA polymerase subunit Rpo5</fullName>
        <ecNumber evidence="1">2.7.7.6</ecNumber>
    </recommendedName>
    <alternativeName>
        <fullName evidence="1">DNA-directed RNA polymerase subunit H</fullName>
    </alternativeName>
</protein>